<gene>
    <name evidence="1" type="primary">hisB</name>
    <name type="ordered locus">Glov_0825</name>
</gene>
<dbReference type="EC" id="4.2.1.19" evidence="1"/>
<dbReference type="EMBL" id="CP001089">
    <property type="protein sequence ID" value="ACD94550.1"/>
    <property type="molecule type" value="Genomic_DNA"/>
</dbReference>
<dbReference type="RefSeq" id="WP_012468906.1">
    <property type="nucleotide sequence ID" value="NC_010814.1"/>
</dbReference>
<dbReference type="SMR" id="B3E4Y5"/>
<dbReference type="STRING" id="398767.Glov_0825"/>
<dbReference type="KEGG" id="glo:Glov_0825"/>
<dbReference type="eggNOG" id="COG0131">
    <property type="taxonomic scope" value="Bacteria"/>
</dbReference>
<dbReference type="HOGENOM" id="CLU_044308_3_0_7"/>
<dbReference type="OrthoDB" id="9790411at2"/>
<dbReference type="UniPathway" id="UPA00031">
    <property type="reaction ID" value="UER00011"/>
</dbReference>
<dbReference type="Proteomes" id="UP000002420">
    <property type="component" value="Chromosome"/>
</dbReference>
<dbReference type="GO" id="GO:0005737">
    <property type="term" value="C:cytoplasm"/>
    <property type="evidence" value="ECO:0007669"/>
    <property type="project" value="UniProtKB-SubCell"/>
</dbReference>
<dbReference type="GO" id="GO:0004424">
    <property type="term" value="F:imidazoleglycerol-phosphate dehydratase activity"/>
    <property type="evidence" value="ECO:0007669"/>
    <property type="project" value="UniProtKB-UniRule"/>
</dbReference>
<dbReference type="GO" id="GO:0000105">
    <property type="term" value="P:L-histidine biosynthetic process"/>
    <property type="evidence" value="ECO:0007669"/>
    <property type="project" value="UniProtKB-UniRule"/>
</dbReference>
<dbReference type="CDD" id="cd07914">
    <property type="entry name" value="IGPD"/>
    <property type="match status" value="1"/>
</dbReference>
<dbReference type="FunFam" id="3.30.230.40:FF:000001">
    <property type="entry name" value="Imidazoleglycerol-phosphate dehydratase HisB"/>
    <property type="match status" value="1"/>
</dbReference>
<dbReference type="FunFam" id="3.30.230.40:FF:000003">
    <property type="entry name" value="Imidazoleglycerol-phosphate dehydratase HisB"/>
    <property type="match status" value="1"/>
</dbReference>
<dbReference type="Gene3D" id="3.30.230.40">
    <property type="entry name" value="Imidazole glycerol phosphate dehydratase, domain 1"/>
    <property type="match status" value="2"/>
</dbReference>
<dbReference type="HAMAP" id="MF_00076">
    <property type="entry name" value="HisB"/>
    <property type="match status" value="1"/>
</dbReference>
<dbReference type="InterPro" id="IPR038494">
    <property type="entry name" value="IGPD_sf"/>
</dbReference>
<dbReference type="InterPro" id="IPR000807">
    <property type="entry name" value="ImidazoleglycerolP_deHydtase"/>
</dbReference>
<dbReference type="InterPro" id="IPR020565">
    <property type="entry name" value="ImidazoleglycerP_deHydtase_CS"/>
</dbReference>
<dbReference type="InterPro" id="IPR020568">
    <property type="entry name" value="Ribosomal_Su5_D2-typ_SF"/>
</dbReference>
<dbReference type="NCBIfam" id="NF002111">
    <property type="entry name" value="PRK00951.2-1"/>
    <property type="match status" value="1"/>
</dbReference>
<dbReference type="NCBIfam" id="NF002114">
    <property type="entry name" value="PRK00951.2-4"/>
    <property type="match status" value="1"/>
</dbReference>
<dbReference type="NCBIfam" id="NF002115">
    <property type="entry name" value="PRK00951.2-5"/>
    <property type="match status" value="1"/>
</dbReference>
<dbReference type="PANTHER" id="PTHR23133:SF2">
    <property type="entry name" value="IMIDAZOLEGLYCEROL-PHOSPHATE DEHYDRATASE"/>
    <property type="match status" value="1"/>
</dbReference>
<dbReference type="PANTHER" id="PTHR23133">
    <property type="entry name" value="IMIDAZOLEGLYCEROL-PHOSPHATE DEHYDRATASE HIS7"/>
    <property type="match status" value="1"/>
</dbReference>
<dbReference type="Pfam" id="PF00475">
    <property type="entry name" value="IGPD"/>
    <property type="match status" value="1"/>
</dbReference>
<dbReference type="SUPFAM" id="SSF54211">
    <property type="entry name" value="Ribosomal protein S5 domain 2-like"/>
    <property type="match status" value="2"/>
</dbReference>
<dbReference type="PROSITE" id="PS00954">
    <property type="entry name" value="IGP_DEHYDRATASE_1"/>
    <property type="match status" value="1"/>
</dbReference>
<dbReference type="PROSITE" id="PS00955">
    <property type="entry name" value="IGP_DEHYDRATASE_2"/>
    <property type="match status" value="1"/>
</dbReference>
<accession>B3E4Y5</accession>
<organism>
    <name type="scientific">Trichlorobacter lovleyi (strain ATCC BAA-1151 / DSM 17278 / SZ)</name>
    <name type="common">Geobacter lovleyi</name>
    <dbReference type="NCBI Taxonomy" id="398767"/>
    <lineage>
        <taxon>Bacteria</taxon>
        <taxon>Pseudomonadati</taxon>
        <taxon>Thermodesulfobacteriota</taxon>
        <taxon>Desulfuromonadia</taxon>
        <taxon>Geobacterales</taxon>
        <taxon>Geobacteraceae</taxon>
        <taxon>Trichlorobacter</taxon>
    </lineage>
</organism>
<feature type="chain" id="PRO_1000092692" description="Imidazoleglycerol-phosphate dehydratase">
    <location>
        <begin position="1"/>
        <end position="195"/>
    </location>
</feature>
<reference key="1">
    <citation type="submission" date="2008-05" db="EMBL/GenBank/DDBJ databases">
        <title>Complete sequence of chromosome of Geobacter lovleyi SZ.</title>
        <authorList>
            <consortium name="US DOE Joint Genome Institute"/>
            <person name="Lucas S."/>
            <person name="Copeland A."/>
            <person name="Lapidus A."/>
            <person name="Glavina del Rio T."/>
            <person name="Dalin E."/>
            <person name="Tice H."/>
            <person name="Bruce D."/>
            <person name="Goodwin L."/>
            <person name="Pitluck S."/>
            <person name="Chertkov O."/>
            <person name="Meincke L."/>
            <person name="Brettin T."/>
            <person name="Detter J.C."/>
            <person name="Han C."/>
            <person name="Tapia R."/>
            <person name="Kuske C.R."/>
            <person name="Schmutz J."/>
            <person name="Larimer F."/>
            <person name="Land M."/>
            <person name="Hauser L."/>
            <person name="Kyrpides N."/>
            <person name="Mikhailova N."/>
            <person name="Sung Y."/>
            <person name="Fletcher K.E."/>
            <person name="Ritalahti K.M."/>
            <person name="Loeffler F.E."/>
            <person name="Richardson P."/>
        </authorList>
    </citation>
    <scope>NUCLEOTIDE SEQUENCE [LARGE SCALE GENOMIC DNA]</scope>
    <source>
        <strain>ATCC BAA-1151 / DSM 17278 / SZ</strain>
    </source>
</reference>
<sequence length="195" mass="21695">MKRTAEIDRSTSETRIHLKLTIDGTGLSAIRTTVPFLDHMLHLFARHGLFDLTVEAQGDIDIDFHHTVEDIGIVLGEAFRQALGDKKGIVRYGTARIPMDETLADVTVDLSGRPYLVYNVDLPKVKVGEFDAELAREFFQAFANNCGCNLHLNLLYGENVHHIIEACFKGFGRSLDSATRQDARLHGVMSTKGVL</sequence>
<evidence type="ECO:0000255" key="1">
    <source>
        <dbReference type="HAMAP-Rule" id="MF_00076"/>
    </source>
</evidence>
<name>HIS7_TRIL1</name>
<keyword id="KW-0028">Amino-acid biosynthesis</keyword>
<keyword id="KW-0963">Cytoplasm</keyword>
<keyword id="KW-0368">Histidine biosynthesis</keyword>
<keyword id="KW-0456">Lyase</keyword>
<keyword id="KW-1185">Reference proteome</keyword>
<comment type="catalytic activity">
    <reaction evidence="1">
        <text>D-erythro-1-(imidazol-4-yl)glycerol 3-phosphate = 3-(imidazol-4-yl)-2-oxopropyl phosphate + H2O</text>
        <dbReference type="Rhea" id="RHEA:11040"/>
        <dbReference type="ChEBI" id="CHEBI:15377"/>
        <dbReference type="ChEBI" id="CHEBI:57766"/>
        <dbReference type="ChEBI" id="CHEBI:58278"/>
        <dbReference type="EC" id="4.2.1.19"/>
    </reaction>
</comment>
<comment type="pathway">
    <text evidence="1">Amino-acid biosynthesis; L-histidine biosynthesis; L-histidine from 5-phospho-alpha-D-ribose 1-diphosphate: step 6/9.</text>
</comment>
<comment type="subcellular location">
    <subcellularLocation>
        <location evidence="1">Cytoplasm</location>
    </subcellularLocation>
</comment>
<comment type="similarity">
    <text evidence="1">Belongs to the imidazoleglycerol-phosphate dehydratase family.</text>
</comment>
<protein>
    <recommendedName>
        <fullName evidence="1">Imidazoleglycerol-phosphate dehydratase</fullName>
        <shortName evidence="1">IGPD</shortName>
        <ecNumber evidence="1">4.2.1.19</ecNumber>
    </recommendedName>
</protein>
<proteinExistence type="inferred from homology"/>